<accession>A1UUB8</accession>
<keyword id="KW-0012">Acyltransferase</keyword>
<keyword id="KW-0028">Amino-acid biosynthesis</keyword>
<keyword id="KW-0963">Cytoplasm</keyword>
<keyword id="KW-0220">Diaminopimelate biosynthesis</keyword>
<keyword id="KW-0457">Lysine biosynthesis</keyword>
<keyword id="KW-0677">Repeat</keyword>
<keyword id="KW-0808">Transferase</keyword>
<organism>
    <name type="scientific">Bartonella bacilliformis (strain ATCC 35685 / KC583 / Herrer 020/F12,63)</name>
    <dbReference type="NCBI Taxonomy" id="360095"/>
    <lineage>
        <taxon>Bacteria</taxon>
        <taxon>Pseudomonadati</taxon>
        <taxon>Pseudomonadota</taxon>
        <taxon>Alphaproteobacteria</taxon>
        <taxon>Hyphomicrobiales</taxon>
        <taxon>Bartonellaceae</taxon>
        <taxon>Bartonella</taxon>
    </lineage>
</organism>
<feature type="chain" id="PRO_1000047118" description="2,3,4,5-tetrahydropyridine-2,6-dicarboxylate N-succinyltransferase">
    <location>
        <begin position="1"/>
        <end position="282"/>
    </location>
</feature>
<feature type="binding site" evidence="1">
    <location>
        <position position="109"/>
    </location>
    <ligand>
        <name>substrate</name>
    </ligand>
</feature>
<feature type="binding site" evidence="1">
    <location>
        <position position="146"/>
    </location>
    <ligand>
        <name>substrate</name>
    </ligand>
</feature>
<gene>
    <name evidence="1" type="primary">dapD</name>
    <name type="ordered locus">BARBAKC583_1323</name>
</gene>
<evidence type="ECO:0000255" key="1">
    <source>
        <dbReference type="HAMAP-Rule" id="MF_00811"/>
    </source>
</evidence>
<name>DAPD_BARBK</name>
<proteinExistence type="inferred from homology"/>
<comment type="catalytic activity">
    <reaction evidence="1">
        <text>(S)-2,3,4,5-tetrahydrodipicolinate + succinyl-CoA + H2O = (S)-2-succinylamino-6-oxoheptanedioate + CoA</text>
        <dbReference type="Rhea" id="RHEA:17325"/>
        <dbReference type="ChEBI" id="CHEBI:15377"/>
        <dbReference type="ChEBI" id="CHEBI:15685"/>
        <dbReference type="ChEBI" id="CHEBI:16845"/>
        <dbReference type="ChEBI" id="CHEBI:57287"/>
        <dbReference type="ChEBI" id="CHEBI:57292"/>
        <dbReference type="EC" id="2.3.1.117"/>
    </reaction>
</comment>
<comment type="pathway">
    <text evidence="1">Amino-acid biosynthesis; L-lysine biosynthesis via DAP pathway; LL-2,6-diaminopimelate from (S)-tetrahydrodipicolinate (succinylase route): step 1/3.</text>
</comment>
<comment type="subunit">
    <text evidence="1">Homotrimer.</text>
</comment>
<comment type="subcellular location">
    <subcellularLocation>
        <location evidence="1">Cytoplasm</location>
    </subcellularLocation>
</comment>
<comment type="similarity">
    <text evidence="1">Belongs to the transferase hexapeptide repeat family.</text>
</comment>
<sequence length="282" mass="30991">MTDLIQLKMIIEKAFNNHDSLNTATKGEIRDSVEYTLNLLDKGEIRVAERQENGQWHVHEWLKKAVLMSFRLNPMHIISGGANESFWWDKIPSKFSGWQETDFKKANFRSVPGAIVRHSAYIASNVILMPSFVNLGAYVDEETMIDTWATVGSCAQIGKHVHLSGGVGIGGVLEPLQASPTIIEDHCFIGARSEVVEGCIIREGSVLGMGVFIGKSTKIIDRSTGEVFIGEVPAYSVVVPGSLPGKPLPNGEAGPNLYCAVIVKRVDQKTREKTSINDLLRD</sequence>
<protein>
    <recommendedName>
        <fullName evidence="1">2,3,4,5-tetrahydropyridine-2,6-dicarboxylate N-succinyltransferase</fullName>
        <ecNumber evidence="1">2.3.1.117</ecNumber>
    </recommendedName>
    <alternativeName>
        <fullName evidence="1">Tetrahydrodipicolinate N-succinyltransferase</fullName>
        <shortName evidence="1">THDP succinyltransferase</shortName>
        <shortName evidence="1">THP succinyltransferase</shortName>
        <shortName evidence="1">Tetrahydropicolinate succinylase</shortName>
    </alternativeName>
</protein>
<dbReference type="EC" id="2.3.1.117" evidence="1"/>
<dbReference type="EMBL" id="CP000524">
    <property type="protein sequence ID" value="ABM44854.1"/>
    <property type="molecule type" value="Genomic_DNA"/>
</dbReference>
<dbReference type="RefSeq" id="WP_005768109.1">
    <property type="nucleotide sequence ID" value="NC_008783.1"/>
</dbReference>
<dbReference type="SMR" id="A1UUB8"/>
<dbReference type="STRING" id="360095.BARBAKC583_1323"/>
<dbReference type="GeneID" id="4684365"/>
<dbReference type="KEGG" id="bbk:BARBAKC583_1323"/>
<dbReference type="PATRIC" id="fig|360095.6.peg.1295"/>
<dbReference type="eggNOG" id="COG2171">
    <property type="taxonomic scope" value="Bacteria"/>
</dbReference>
<dbReference type="HOGENOM" id="CLU_050859_0_1_5"/>
<dbReference type="OrthoDB" id="9775362at2"/>
<dbReference type="UniPathway" id="UPA00034">
    <property type="reaction ID" value="UER00019"/>
</dbReference>
<dbReference type="Proteomes" id="UP000000643">
    <property type="component" value="Chromosome"/>
</dbReference>
<dbReference type="GO" id="GO:0005737">
    <property type="term" value="C:cytoplasm"/>
    <property type="evidence" value="ECO:0007669"/>
    <property type="project" value="UniProtKB-SubCell"/>
</dbReference>
<dbReference type="GO" id="GO:0008666">
    <property type="term" value="F:2,3,4,5-tetrahydropyridine-2,6-dicarboxylate N-succinyltransferase activity"/>
    <property type="evidence" value="ECO:0007669"/>
    <property type="project" value="UniProtKB-UniRule"/>
</dbReference>
<dbReference type="GO" id="GO:0019877">
    <property type="term" value="P:diaminopimelate biosynthetic process"/>
    <property type="evidence" value="ECO:0007669"/>
    <property type="project" value="UniProtKB-UniRule"/>
</dbReference>
<dbReference type="GO" id="GO:0009089">
    <property type="term" value="P:lysine biosynthetic process via diaminopimelate"/>
    <property type="evidence" value="ECO:0007669"/>
    <property type="project" value="UniProtKB-UniRule"/>
</dbReference>
<dbReference type="CDD" id="cd03350">
    <property type="entry name" value="LbH_THP_succinylT"/>
    <property type="match status" value="1"/>
</dbReference>
<dbReference type="Gene3D" id="2.160.10.10">
    <property type="entry name" value="Hexapeptide repeat proteins"/>
    <property type="match status" value="1"/>
</dbReference>
<dbReference type="Gene3D" id="1.10.166.10">
    <property type="entry name" value="Tetrahydrodipicolinate-N-succinyltransferase, N-terminal domain"/>
    <property type="match status" value="1"/>
</dbReference>
<dbReference type="HAMAP" id="MF_00811">
    <property type="entry name" value="DapD"/>
    <property type="match status" value="1"/>
</dbReference>
<dbReference type="InterPro" id="IPR005664">
    <property type="entry name" value="DapD_Trfase_Hexpep_rpt_fam"/>
</dbReference>
<dbReference type="InterPro" id="IPR001451">
    <property type="entry name" value="Hexapep"/>
</dbReference>
<dbReference type="InterPro" id="IPR018357">
    <property type="entry name" value="Hexapep_transf_CS"/>
</dbReference>
<dbReference type="InterPro" id="IPR023180">
    <property type="entry name" value="THP_succinylTrfase_dom1"/>
</dbReference>
<dbReference type="InterPro" id="IPR037133">
    <property type="entry name" value="THP_succinylTrfase_N_sf"/>
</dbReference>
<dbReference type="InterPro" id="IPR050179">
    <property type="entry name" value="Trans_hexapeptide_repeat"/>
</dbReference>
<dbReference type="InterPro" id="IPR011004">
    <property type="entry name" value="Trimer_LpxA-like_sf"/>
</dbReference>
<dbReference type="NCBIfam" id="TIGR00965">
    <property type="entry name" value="dapD"/>
    <property type="match status" value="1"/>
</dbReference>
<dbReference type="NCBIfam" id="NF008808">
    <property type="entry name" value="PRK11830.1"/>
    <property type="match status" value="1"/>
</dbReference>
<dbReference type="PANTHER" id="PTHR43300:SF10">
    <property type="entry name" value="2,3,4,5-TETRAHYDROPYRIDINE-2,6-DICARBOXYLATE N-ACETYLTRANSFERASE"/>
    <property type="match status" value="1"/>
</dbReference>
<dbReference type="PANTHER" id="PTHR43300">
    <property type="entry name" value="ACETYLTRANSFERASE"/>
    <property type="match status" value="1"/>
</dbReference>
<dbReference type="Pfam" id="PF14602">
    <property type="entry name" value="Hexapep_2"/>
    <property type="match status" value="1"/>
</dbReference>
<dbReference type="Pfam" id="PF14805">
    <property type="entry name" value="THDPS_N_2"/>
    <property type="match status" value="1"/>
</dbReference>
<dbReference type="SUPFAM" id="SSF51161">
    <property type="entry name" value="Trimeric LpxA-like enzymes"/>
    <property type="match status" value="1"/>
</dbReference>
<dbReference type="PROSITE" id="PS00101">
    <property type="entry name" value="HEXAPEP_TRANSFERASES"/>
    <property type="match status" value="1"/>
</dbReference>
<reference key="1">
    <citation type="submission" date="2006-12" db="EMBL/GenBank/DDBJ databases">
        <authorList>
            <person name="Hendrix L."/>
            <person name="Mohamoud Y."/>
            <person name="Radune D."/>
            <person name="Shvartsbeyn A."/>
            <person name="Daugherty S."/>
            <person name="Dodson R."/>
            <person name="Durkin A.S."/>
            <person name="Harkins D."/>
            <person name="Huot H."/>
            <person name="Kothari S.P."/>
            <person name="Madupu R."/>
            <person name="Li J."/>
            <person name="Nelson W.C."/>
            <person name="Shrivastava S."/>
            <person name="Giglio M.G."/>
            <person name="Haft D."/>
            <person name="Selengut J."/>
            <person name="Fraser-Ligget C."/>
            <person name="Seshadri R."/>
        </authorList>
    </citation>
    <scope>NUCLEOTIDE SEQUENCE [LARGE SCALE GENOMIC DNA]</scope>
    <source>
        <strain>ATCC 35685 / KC583 / Herrer 020/F12,63</strain>
    </source>
</reference>